<dbReference type="EC" id="1.1.-.-" evidence="1"/>
<dbReference type="EMBL" id="BX897700">
    <property type="protein sequence ID" value="CAF25762.1"/>
    <property type="molecule type" value="Genomic_DNA"/>
</dbReference>
<dbReference type="RefSeq" id="WP_011179071.1">
    <property type="nucleotide sequence ID" value="NC_005955.1"/>
</dbReference>
<dbReference type="SMR" id="Q6G0J2"/>
<dbReference type="KEGG" id="bqu:BQ02590"/>
<dbReference type="eggNOG" id="COG1304">
    <property type="taxonomic scope" value="Bacteria"/>
</dbReference>
<dbReference type="HOGENOM" id="CLU_020639_0_0_5"/>
<dbReference type="OrthoDB" id="9770452at2"/>
<dbReference type="Proteomes" id="UP000000597">
    <property type="component" value="Chromosome"/>
</dbReference>
<dbReference type="GO" id="GO:0005886">
    <property type="term" value="C:plasma membrane"/>
    <property type="evidence" value="ECO:0007669"/>
    <property type="project" value="UniProtKB-SubCell"/>
</dbReference>
<dbReference type="GO" id="GO:0010181">
    <property type="term" value="F:FMN binding"/>
    <property type="evidence" value="ECO:0007669"/>
    <property type="project" value="InterPro"/>
</dbReference>
<dbReference type="GO" id="GO:0004459">
    <property type="term" value="F:L-lactate dehydrogenase activity"/>
    <property type="evidence" value="ECO:0007669"/>
    <property type="project" value="UniProtKB-UniRule"/>
</dbReference>
<dbReference type="GO" id="GO:0009060">
    <property type="term" value="P:aerobic respiration"/>
    <property type="evidence" value="ECO:0007669"/>
    <property type="project" value="TreeGrafter"/>
</dbReference>
<dbReference type="GO" id="GO:0006089">
    <property type="term" value="P:lactate metabolic process"/>
    <property type="evidence" value="ECO:0007669"/>
    <property type="project" value="UniProtKB-UniRule"/>
</dbReference>
<dbReference type="CDD" id="cd02809">
    <property type="entry name" value="alpha_hydroxyacid_oxid_FMN"/>
    <property type="match status" value="1"/>
</dbReference>
<dbReference type="FunFam" id="3.20.20.70:FF:000029">
    <property type="entry name" value="L-lactate dehydrogenase"/>
    <property type="match status" value="1"/>
</dbReference>
<dbReference type="Gene3D" id="3.20.20.70">
    <property type="entry name" value="Aldolase class I"/>
    <property type="match status" value="1"/>
</dbReference>
<dbReference type="HAMAP" id="MF_01559">
    <property type="entry name" value="L_lact_dehydr"/>
    <property type="match status" value="1"/>
</dbReference>
<dbReference type="InterPro" id="IPR013785">
    <property type="entry name" value="Aldolase_TIM"/>
</dbReference>
<dbReference type="InterPro" id="IPR012133">
    <property type="entry name" value="Alpha-hydoxy_acid_DH_FMN"/>
</dbReference>
<dbReference type="InterPro" id="IPR000262">
    <property type="entry name" value="FMN-dep_DH"/>
</dbReference>
<dbReference type="InterPro" id="IPR037396">
    <property type="entry name" value="FMN_HAD"/>
</dbReference>
<dbReference type="InterPro" id="IPR008259">
    <property type="entry name" value="FMN_hydac_DH_AS"/>
</dbReference>
<dbReference type="InterPro" id="IPR020920">
    <property type="entry name" value="LldD"/>
</dbReference>
<dbReference type="NCBIfam" id="NF033901">
    <property type="entry name" value="L_lactate_LldD"/>
    <property type="match status" value="1"/>
</dbReference>
<dbReference type="NCBIfam" id="NF008398">
    <property type="entry name" value="PRK11197.1"/>
    <property type="match status" value="1"/>
</dbReference>
<dbReference type="PANTHER" id="PTHR10578:SF85">
    <property type="entry name" value="L-LACTATE DEHYDROGENASE"/>
    <property type="match status" value="1"/>
</dbReference>
<dbReference type="PANTHER" id="PTHR10578">
    <property type="entry name" value="S -2-HYDROXY-ACID OXIDASE-RELATED"/>
    <property type="match status" value="1"/>
</dbReference>
<dbReference type="Pfam" id="PF01070">
    <property type="entry name" value="FMN_dh"/>
    <property type="match status" value="1"/>
</dbReference>
<dbReference type="PIRSF" id="PIRSF000138">
    <property type="entry name" value="Al-hdrx_acd_dh"/>
    <property type="match status" value="1"/>
</dbReference>
<dbReference type="SUPFAM" id="SSF51395">
    <property type="entry name" value="FMN-linked oxidoreductases"/>
    <property type="match status" value="1"/>
</dbReference>
<dbReference type="PROSITE" id="PS00557">
    <property type="entry name" value="FMN_HYDROXY_ACID_DH_1"/>
    <property type="match status" value="1"/>
</dbReference>
<dbReference type="PROSITE" id="PS51349">
    <property type="entry name" value="FMN_HYDROXY_ACID_DH_2"/>
    <property type="match status" value="1"/>
</dbReference>
<reference key="1">
    <citation type="journal article" date="2004" name="Proc. Natl. Acad. Sci. U.S.A.">
        <title>The louse-borne human pathogen Bartonella quintana is a genomic derivative of the zoonotic agent Bartonella henselae.</title>
        <authorList>
            <person name="Alsmark U.C.M."/>
            <person name="Frank A.C."/>
            <person name="Karlberg E.O."/>
            <person name="Legault B.-A."/>
            <person name="Ardell D.H."/>
            <person name="Canbaeck B."/>
            <person name="Eriksson A.-S."/>
            <person name="Naeslund A.K."/>
            <person name="Handley S.A."/>
            <person name="Huvet M."/>
            <person name="La Scola B."/>
            <person name="Holmberg M."/>
            <person name="Andersson S.G.E."/>
        </authorList>
    </citation>
    <scope>NUCLEOTIDE SEQUENCE [LARGE SCALE GENOMIC DNA]</scope>
    <source>
        <strain>Toulouse</strain>
    </source>
</reference>
<feature type="chain" id="PRO_0000206332" description="L-lactate dehydrogenase">
    <location>
        <begin position="1"/>
        <end position="383"/>
    </location>
</feature>
<feature type="domain" description="FMN hydroxy acid dehydrogenase" evidence="1">
    <location>
        <begin position="1"/>
        <end position="380"/>
    </location>
</feature>
<feature type="active site" description="Proton acceptor" evidence="1">
    <location>
        <position position="275"/>
    </location>
</feature>
<feature type="binding site" evidence="1">
    <location>
        <position position="24"/>
    </location>
    <ligand>
        <name>substrate</name>
    </ligand>
</feature>
<feature type="binding site" evidence="1">
    <location>
        <position position="106"/>
    </location>
    <ligand>
        <name>FMN</name>
        <dbReference type="ChEBI" id="CHEBI:58210"/>
    </ligand>
</feature>
<feature type="binding site" evidence="1">
    <location>
        <position position="127"/>
    </location>
    <ligand>
        <name>FMN</name>
        <dbReference type="ChEBI" id="CHEBI:58210"/>
    </ligand>
</feature>
<feature type="binding site" evidence="1">
    <location>
        <position position="129"/>
    </location>
    <ligand>
        <name>substrate</name>
    </ligand>
</feature>
<feature type="binding site" evidence="1">
    <location>
        <position position="155"/>
    </location>
    <ligand>
        <name>FMN</name>
        <dbReference type="ChEBI" id="CHEBI:58210"/>
    </ligand>
</feature>
<feature type="binding site" evidence="1">
    <location>
        <position position="164"/>
    </location>
    <ligand>
        <name>substrate</name>
    </ligand>
</feature>
<feature type="binding site" evidence="1">
    <location>
        <position position="251"/>
    </location>
    <ligand>
        <name>FMN</name>
        <dbReference type="ChEBI" id="CHEBI:58210"/>
    </ligand>
</feature>
<feature type="binding site" evidence="1">
    <location>
        <position position="278"/>
    </location>
    <ligand>
        <name>substrate</name>
    </ligand>
</feature>
<feature type="binding site" evidence="1">
    <location>
        <begin position="306"/>
        <end position="330"/>
    </location>
    <ligand>
        <name>FMN</name>
        <dbReference type="ChEBI" id="CHEBI:58210"/>
    </ligand>
</feature>
<gene>
    <name evidence="1" type="primary">lldD</name>
    <name type="ordered locus">BQ02590</name>
</gene>
<comment type="function">
    <text evidence="1">Catalyzes the conversion of L-lactate to pyruvate. Is coupled to the respiratory chain.</text>
</comment>
<comment type="catalytic activity">
    <reaction evidence="1">
        <text>(S)-lactate + A = pyruvate + AH2</text>
        <dbReference type="Rhea" id="RHEA:45816"/>
        <dbReference type="ChEBI" id="CHEBI:13193"/>
        <dbReference type="ChEBI" id="CHEBI:15361"/>
        <dbReference type="ChEBI" id="CHEBI:16651"/>
        <dbReference type="ChEBI" id="CHEBI:17499"/>
    </reaction>
</comment>
<comment type="cofactor">
    <cofactor evidence="1">
        <name>FMN</name>
        <dbReference type="ChEBI" id="CHEBI:58210"/>
    </cofactor>
</comment>
<comment type="subcellular location">
    <subcellularLocation>
        <location evidence="1">Cell inner membrane</location>
        <topology evidence="1">Peripheral membrane protein</topology>
    </subcellularLocation>
</comment>
<comment type="similarity">
    <text evidence="1">Belongs to the FMN-dependent alpha-hydroxy acid dehydrogenase family.</text>
</comment>
<accession>Q6G0J2</accession>
<protein>
    <recommendedName>
        <fullName evidence="1">L-lactate dehydrogenase</fullName>
        <ecNumber evidence="1">1.1.-.-</ecNumber>
    </recommendedName>
</protein>
<sequence>MIISSTFDYRKAAKRRLPPFLFHYIDGGAYAEETMRRNYADLQALALRQRILRQVGEVDLSIKLFDQRLNLPIVLAPVGLTGMYARRGEVKAARAAVAKGIPFTLSSVSVCSLAEVHAEVGSGFWFQLYVLKDRGFMRDVLERSWLAGVRTLVFTVDMPVPGARYRDAHSGMSGPYAGLRRILQAVVHPHWAWNVGIMGRPHDLGNVSTYLQKKITLEDYVGWLGANFDPSIGWSDLQWIRDFWKGKMILKGILDPQDAREAVQFGADGIVVSNHGGRQLDGVLSTARALPAIAEVVTGDLTILADSGVRSGLDVVRMIAQGADAVMIGRAFIYALAAAGEKGVMHLLDLFANEMRVAMTLTGVRAVKEITHESLASTDALNQ</sequence>
<keyword id="KW-0997">Cell inner membrane</keyword>
<keyword id="KW-1003">Cell membrane</keyword>
<keyword id="KW-0285">Flavoprotein</keyword>
<keyword id="KW-0288">FMN</keyword>
<keyword id="KW-0472">Membrane</keyword>
<keyword id="KW-0560">Oxidoreductase</keyword>
<proteinExistence type="inferred from homology"/>
<name>LLDD_BARQU</name>
<organism>
    <name type="scientific">Bartonella quintana (strain Toulouse)</name>
    <name type="common">Rochalimaea quintana</name>
    <dbReference type="NCBI Taxonomy" id="283165"/>
    <lineage>
        <taxon>Bacteria</taxon>
        <taxon>Pseudomonadati</taxon>
        <taxon>Pseudomonadota</taxon>
        <taxon>Alphaproteobacteria</taxon>
        <taxon>Hyphomicrobiales</taxon>
        <taxon>Bartonellaceae</taxon>
        <taxon>Bartonella</taxon>
    </lineage>
</organism>
<evidence type="ECO:0000255" key="1">
    <source>
        <dbReference type="HAMAP-Rule" id="MF_01559"/>
    </source>
</evidence>